<name>S31A1_HUMAN</name>
<feature type="chain" id="PRO_0000313017" description="Spermatogenesis-associated protein 31A1">
    <location>
        <begin position="1"/>
        <end position="1347"/>
    </location>
</feature>
<feature type="transmembrane region" description="Helical" evidence="2">
    <location>
        <begin position="23"/>
        <end position="43"/>
    </location>
</feature>
<feature type="region of interest" description="Disordered" evidence="3">
    <location>
        <begin position="55"/>
        <end position="89"/>
    </location>
</feature>
<feature type="region of interest" description="Disordered" evidence="3">
    <location>
        <begin position="106"/>
        <end position="235"/>
    </location>
</feature>
<feature type="region of interest" description="Disordered" evidence="3">
    <location>
        <begin position="373"/>
        <end position="397"/>
    </location>
</feature>
<feature type="region of interest" description="Disordered" evidence="3">
    <location>
        <begin position="628"/>
        <end position="658"/>
    </location>
</feature>
<feature type="region of interest" description="Disordered" evidence="3">
    <location>
        <begin position="899"/>
        <end position="955"/>
    </location>
</feature>
<feature type="region of interest" description="Disordered" evidence="3">
    <location>
        <begin position="1085"/>
        <end position="1160"/>
    </location>
</feature>
<feature type="compositionally biased region" description="Basic residues" evidence="3">
    <location>
        <begin position="60"/>
        <end position="82"/>
    </location>
</feature>
<feature type="compositionally biased region" description="Polar residues" evidence="3">
    <location>
        <begin position="165"/>
        <end position="178"/>
    </location>
</feature>
<feature type="compositionally biased region" description="Pro residues" evidence="3">
    <location>
        <begin position="198"/>
        <end position="222"/>
    </location>
</feature>
<feature type="compositionally biased region" description="Polar residues" evidence="3">
    <location>
        <begin position="631"/>
        <end position="651"/>
    </location>
</feature>
<feature type="compositionally biased region" description="Polar residues" evidence="3">
    <location>
        <begin position="927"/>
        <end position="948"/>
    </location>
</feature>
<feature type="compositionally biased region" description="Basic and acidic residues" evidence="3">
    <location>
        <begin position="1108"/>
        <end position="1127"/>
    </location>
</feature>
<feature type="compositionally biased region" description="Basic and acidic residues" evidence="3">
    <location>
        <begin position="1137"/>
        <end position="1146"/>
    </location>
</feature>
<feature type="sequence conflict" description="In Ref. 1; CAI17100." evidence="4" ref="1">
    <original>P</original>
    <variation>R</variation>
    <location>
        <position position="88"/>
    </location>
</feature>
<feature type="sequence conflict" description="In Ref. 1; CAI17100." evidence="4" ref="1">
    <original>L</original>
    <variation>F</variation>
    <location>
        <position position="398"/>
    </location>
</feature>
<feature type="sequence conflict" description="In Ref. 1; CAI17100." evidence="4" ref="1">
    <original>A</original>
    <variation>T</variation>
    <location>
        <position position="1063"/>
    </location>
</feature>
<feature type="sequence conflict" description="In Ref. 1; CAI17100." evidence="4" ref="1">
    <original>N</original>
    <variation>S</variation>
    <location>
        <position position="1099"/>
    </location>
</feature>
<evidence type="ECO:0000250" key="1"/>
<evidence type="ECO:0000255" key="2"/>
<evidence type="ECO:0000256" key="3">
    <source>
        <dbReference type="SAM" id="MobiDB-lite"/>
    </source>
</evidence>
<evidence type="ECO:0000305" key="4"/>
<evidence type="ECO:0000312" key="5">
    <source>
        <dbReference type="HGNC" id="HGNC:23394"/>
    </source>
</evidence>
<sequence>MENLPFPLKLLSASSLNAPSSTPWVLDIFLTLVFALGFFFLLLPYLSYFRCDDPPSPSPGKRKCPVGRRRRPRGRMKNHSLRAGRECPRGLQETSDLLSQLQSLLGPHLDKGDFGQLSGPDPPGEVGERAPDGASQSSHEPMEDAAPILSPLASPDPQAKHPQDLASTPSPGPMTTSVSSLSASQPPEPSLPLEHPSPEPPALFPHPPHTPDPLACSPPPPKGFTAPPLRDSTLITPSHCDSVALPLGTVPQSLSPHEDLVASVPAISGLGGSNSHVSASSRWQETARTSCAFNSSVQQDHLSRHPPETYQMEAGSLFLLSSDGQNAVGIQVTETAKVNIWEEKENVGSFTDRMTPEKHLNSLRNLAKSLDAEQDTTNPKPFWNMGENSKQLPGPQKLSDPRLWQESFWKNYSQLFWGLPSLHSESLVANAWVTDRSYTLQSPPFLFNEMSNVCPIQRETTMSPLLFQAQPPSHLGPECQPFISSTPQFRPTPMAQAEAQAHLQSSFPVLSPAFPSLIKNTGVACPASQNKVQALSLPETQHPEWPLLRRQLEGRLALPSRVQKSQDVFSVSTPNLPQESLTSILPENFPVSPELRRQLEQHIKKWIIQHWGNLGRIQESLDLMQLRDESPGTSQAKGKPSPWQSSMSTGESSKEAQKVKFQLERDPCPHLGQILGETPQNLSRDMKSFPRKVLGVTSEESERNLRKPLRSDSGSDLLRCTERTHIENILKAHMGRNLGQTNEGLIPVRVRRSWLAVNQALPVSNTHVKTSNLAAPKSGKACVNTAQVLSFLEPCTQQGLGAHIVRFWAKHRWGLPLRVLKPIQCFKLEKVSSLSLTQLAGPSSATCESGAGSEVEVDMFLRKPPMASLRKQVLTKASDHMPESLLASSPAWKQFQRAPRGIPSWNDHGPLKPPPAGQEGRWPSKPLTYSLTGSTQQSRSLGAQSSKAGETREAVPQCRVPLETCMLANLQATSEDMHGFEAPGTSKSSLHPRVSVSQDPRKLCLMEEVVNEFEPGMATKSETQPQVCAAVVLLPDGQASVVPHASENLVSQVPQGHLQSMPAGNMRASQELHDLMAARRSKLVHEEPRNPNCQGSCKNQRPMFPPIHKSEKSRKPNLEKHEERLEGLRTPQLTPVRKTEDTHQDEGVQLLPSKKQPPSVSHFGGNIKQFFQWIFSKKKSKPAPVTAESQKTVKNRSCVYSSSAEAQGLMTAVGQMLDEKMSLCHARHASKVNQHKQKFQAPVCGFPCNHRHLFYSEHGRILSYAASSQQATLKSQGCPNRDRQIRNQQPLKSVRCNNEQWGLRHPQILHPKKAVSPVSPLQHWPKTSGASSHHHHCPRHCLLWEGI</sequence>
<proteinExistence type="evidence at protein level"/>
<accession>Q5TZJ5</accession>
<accession>Q5RGS2</accession>
<gene>
    <name evidence="5" type="primary">SPATA31A1</name>
    <name evidence="5" type="synonym">C9orf36</name>
    <name evidence="5" type="synonym">FAM75A1</name>
    <name evidence="5" type="synonym">FAM75A2</name>
    <name evidence="5" type="synonym">SPATA31A2</name>
</gene>
<comment type="function">
    <text evidence="1">May play a role in spermatogenesis.</text>
</comment>
<comment type="subcellular location">
    <subcellularLocation>
        <location evidence="4">Membrane</location>
        <topology evidence="4">Single-pass membrane protein</topology>
    </subcellularLocation>
</comment>
<comment type="similarity">
    <text evidence="4">Belongs to the SPATA31 family.</text>
</comment>
<protein>
    <recommendedName>
        <fullName evidence="4">Spermatogenesis-associated protein 31A1</fullName>
    </recommendedName>
    <alternativeName>
        <fullName evidence="4">Protein FAM75A1</fullName>
    </alternativeName>
</protein>
<reference key="1">
    <citation type="journal article" date="2004" name="Nature">
        <title>DNA sequence and analysis of human chromosome 9.</title>
        <authorList>
            <person name="Humphray S.J."/>
            <person name="Oliver K."/>
            <person name="Hunt A.R."/>
            <person name="Plumb R.W."/>
            <person name="Loveland J.E."/>
            <person name="Howe K.L."/>
            <person name="Andrews T.D."/>
            <person name="Searle S."/>
            <person name="Hunt S.E."/>
            <person name="Scott C.E."/>
            <person name="Jones M.C."/>
            <person name="Ainscough R."/>
            <person name="Almeida J.P."/>
            <person name="Ambrose K.D."/>
            <person name="Ashwell R.I.S."/>
            <person name="Babbage A.K."/>
            <person name="Babbage S."/>
            <person name="Bagguley C.L."/>
            <person name="Bailey J."/>
            <person name="Banerjee R."/>
            <person name="Barker D.J."/>
            <person name="Barlow K.F."/>
            <person name="Bates K."/>
            <person name="Beasley H."/>
            <person name="Beasley O."/>
            <person name="Bird C.P."/>
            <person name="Bray-Allen S."/>
            <person name="Brown A.J."/>
            <person name="Brown J.Y."/>
            <person name="Burford D."/>
            <person name="Burrill W."/>
            <person name="Burton J."/>
            <person name="Carder C."/>
            <person name="Carter N.P."/>
            <person name="Chapman J.C."/>
            <person name="Chen Y."/>
            <person name="Clarke G."/>
            <person name="Clark S.Y."/>
            <person name="Clee C.M."/>
            <person name="Clegg S."/>
            <person name="Collier R.E."/>
            <person name="Corby N."/>
            <person name="Crosier M."/>
            <person name="Cummings A.T."/>
            <person name="Davies J."/>
            <person name="Dhami P."/>
            <person name="Dunn M."/>
            <person name="Dutta I."/>
            <person name="Dyer L.W."/>
            <person name="Earthrowl M.E."/>
            <person name="Faulkner L."/>
            <person name="Fleming C.J."/>
            <person name="Frankish A."/>
            <person name="Frankland J.A."/>
            <person name="French L."/>
            <person name="Fricker D.G."/>
            <person name="Garner P."/>
            <person name="Garnett J."/>
            <person name="Ghori J."/>
            <person name="Gilbert J.G.R."/>
            <person name="Glison C."/>
            <person name="Grafham D.V."/>
            <person name="Gribble S."/>
            <person name="Griffiths C."/>
            <person name="Griffiths-Jones S."/>
            <person name="Grocock R."/>
            <person name="Guy J."/>
            <person name="Hall R.E."/>
            <person name="Hammond S."/>
            <person name="Harley J.L."/>
            <person name="Harrison E.S.I."/>
            <person name="Hart E.A."/>
            <person name="Heath P.D."/>
            <person name="Henderson C.D."/>
            <person name="Hopkins B.L."/>
            <person name="Howard P.J."/>
            <person name="Howden P.J."/>
            <person name="Huckle E."/>
            <person name="Johnson C."/>
            <person name="Johnson D."/>
            <person name="Joy A.A."/>
            <person name="Kay M."/>
            <person name="Keenan S."/>
            <person name="Kershaw J.K."/>
            <person name="Kimberley A.M."/>
            <person name="King A."/>
            <person name="Knights A."/>
            <person name="Laird G.K."/>
            <person name="Langford C."/>
            <person name="Lawlor S."/>
            <person name="Leongamornlert D.A."/>
            <person name="Leversha M."/>
            <person name="Lloyd C."/>
            <person name="Lloyd D.M."/>
            <person name="Lovell J."/>
            <person name="Martin S."/>
            <person name="Mashreghi-Mohammadi M."/>
            <person name="Matthews L."/>
            <person name="McLaren S."/>
            <person name="McLay K.E."/>
            <person name="McMurray A."/>
            <person name="Milne S."/>
            <person name="Nickerson T."/>
            <person name="Nisbett J."/>
            <person name="Nordsiek G."/>
            <person name="Pearce A.V."/>
            <person name="Peck A.I."/>
            <person name="Porter K.M."/>
            <person name="Pandian R."/>
            <person name="Pelan S."/>
            <person name="Phillimore B."/>
            <person name="Povey S."/>
            <person name="Ramsey Y."/>
            <person name="Rand V."/>
            <person name="Scharfe M."/>
            <person name="Sehra H.K."/>
            <person name="Shownkeen R."/>
            <person name="Sims S.K."/>
            <person name="Skuce C.D."/>
            <person name="Smith M."/>
            <person name="Steward C.A."/>
            <person name="Swarbreck D."/>
            <person name="Sycamore N."/>
            <person name="Tester J."/>
            <person name="Thorpe A."/>
            <person name="Tracey A."/>
            <person name="Tromans A."/>
            <person name="Thomas D.W."/>
            <person name="Wall M."/>
            <person name="Wallis J.M."/>
            <person name="West A.P."/>
            <person name="Whitehead S.L."/>
            <person name="Willey D.L."/>
            <person name="Williams S.A."/>
            <person name="Wilming L."/>
            <person name="Wray P.W."/>
            <person name="Young L."/>
            <person name="Ashurst J.L."/>
            <person name="Coulson A."/>
            <person name="Blocker H."/>
            <person name="Durbin R.M."/>
            <person name="Sulston J.E."/>
            <person name="Hubbard T."/>
            <person name="Jackson M.J."/>
            <person name="Bentley D.R."/>
            <person name="Beck S."/>
            <person name="Rogers J."/>
            <person name="Dunham I."/>
        </authorList>
    </citation>
    <scope>NUCLEOTIDE SEQUENCE [LARGE SCALE GENOMIC DNA]</scope>
</reference>
<dbReference type="EMBL" id="BX005214">
    <property type="status" value="NOT_ANNOTATED_CDS"/>
    <property type="molecule type" value="Genomic_DNA"/>
</dbReference>
<dbReference type="EMBL" id="BX664726">
    <property type="protein sequence ID" value="CAI17100.1"/>
    <property type="molecule type" value="Genomic_DNA"/>
</dbReference>
<dbReference type="CCDS" id="CCDS43808.3"/>
<dbReference type="RefSeq" id="NP_001078921.3">
    <property type="nucleotide sequence ID" value="NM_001085452.4"/>
</dbReference>
<dbReference type="BioGRID" id="571847">
    <property type="interactions" value="1"/>
</dbReference>
<dbReference type="FunCoup" id="Q5TZJ5">
    <property type="interactions" value="1"/>
</dbReference>
<dbReference type="STRING" id="9606.ENSP00000498856"/>
<dbReference type="iPTMnet" id="Q5TZJ5"/>
<dbReference type="PhosphoSitePlus" id="Q5TZJ5"/>
<dbReference type="BioMuta" id="SPATA31A1"/>
<dbReference type="DMDM" id="74746693"/>
<dbReference type="jPOST" id="Q5TZJ5"/>
<dbReference type="MassIVE" id="Q5TZJ5"/>
<dbReference type="PaxDb" id="9606-ENSP00000366875"/>
<dbReference type="PeptideAtlas" id="Q5TZJ5"/>
<dbReference type="ProteomicsDB" id="63731"/>
<dbReference type="Antibodypedia" id="76540">
    <property type="antibodies" value="7 antibodies from 4 providers"/>
</dbReference>
<dbReference type="Ensembl" id="ENST00000377647.6">
    <property type="protein sequence ID" value="ENSP00000366875.5"/>
    <property type="gene ID" value="ENSG00000204849.10"/>
</dbReference>
<dbReference type="GeneID" id="647060"/>
<dbReference type="MANE-Select" id="ENST00000377647.6">
    <property type="protein sequence ID" value="ENSP00000366875.5"/>
    <property type="RefSeq nucleotide sequence ID" value="NM_001085452.4"/>
    <property type="RefSeq protein sequence ID" value="NP_001078921.3"/>
</dbReference>
<dbReference type="UCSC" id="uc004abm.4">
    <property type="organism name" value="human"/>
</dbReference>
<dbReference type="AGR" id="HGNC:23394"/>
<dbReference type="GeneCards" id="SPATA31A1"/>
<dbReference type="HGNC" id="HGNC:23394">
    <property type="gene designation" value="SPATA31A1"/>
</dbReference>
<dbReference type="HPA" id="ENSG00000204849">
    <property type="expression patterns" value="Tissue enriched (testis)"/>
</dbReference>
<dbReference type="neXtProt" id="NX_Q5TZJ5"/>
<dbReference type="PharmGKB" id="PA162387841"/>
<dbReference type="VEuPathDB" id="HostDB:ENSG00000204849"/>
<dbReference type="eggNOG" id="ENOG502RU0E">
    <property type="taxonomic scope" value="Eukaryota"/>
</dbReference>
<dbReference type="GeneTree" id="ENSGT00950000183043"/>
<dbReference type="HOGENOM" id="CLU_005668_2_0_1"/>
<dbReference type="InParanoid" id="Q5TZJ5"/>
<dbReference type="OMA" id="GKCASEY"/>
<dbReference type="OrthoDB" id="9616581at2759"/>
<dbReference type="PAN-GO" id="Q5TZJ5">
    <property type="GO annotations" value="0 GO annotations based on evolutionary models"/>
</dbReference>
<dbReference type="PhylomeDB" id="Q5TZJ5"/>
<dbReference type="TreeFam" id="TF338531"/>
<dbReference type="Pharos" id="Q5TZJ5">
    <property type="development level" value="Tdark"/>
</dbReference>
<dbReference type="PRO" id="PR:Q5TZJ5"/>
<dbReference type="Proteomes" id="UP000005640">
    <property type="component" value="Chromosome 9"/>
</dbReference>
<dbReference type="RNAct" id="Q5TZJ5">
    <property type="molecule type" value="protein"/>
</dbReference>
<dbReference type="Bgee" id="ENSG00000204849">
    <property type="expression patterns" value="Expressed in left testis and 9 other cell types or tissues"/>
</dbReference>
<dbReference type="GO" id="GO:0016020">
    <property type="term" value="C:membrane"/>
    <property type="evidence" value="ECO:0007669"/>
    <property type="project" value="UniProtKB-SubCell"/>
</dbReference>
<dbReference type="GO" id="GO:0030154">
    <property type="term" value="P:cell differentiation"/>
    <property type="evidence" value="ECO:0007669"/>
    <property type="project" value="UniProtKB-KW"/>
</dbReference>
<dbReference type="GO" id="GO:0007283">
    <property type="term" value="P:spermatogenesis"/>
    <property type="evidence" value="ECO:0007669"/>
    <property type="project" value="UniProtKB-KW"/>
</dbReference>
<dbReference type="InterPro" id="IPR039509">
    <property type="entry name" value="SPATA31"/>
</dbReference>
<dbReference type="InterPro" id="IPR027970">
    <property type="entry name" value="SPATA31F3-like"/>
</dbReference>
<dbReference type="PANTHER" id="PTHR21859">
    <property type="entry name" value="ACROSOME-SPECIFIC PROTEIN"/>
    <property type="match status" value="1"/>
</dbReference>
<dbReference type="PANTHER" id="PTHR21859:SF55">
    <property type="entry name" value="SPERMATOGENESIS-ASSOCIATED PROTEIN 31A1-RELATED"/>
    <property type="match status" value="1"/>
</dbReference>
<dbReference type="Pfam" id="PF15371">
    <property type="entry name" value="DUF4599"/>
    <property type="match status" value="1"/>
</dbReference>
<dbReference type="Pfam" id="PF14650">
    <property type="entry name" value="FAM75"/>
    <property type="match status" value="1"/>
</dbReference>
<organism>
    <name type="scientific">Homo sapiens</name>
    <name type="common">Human</name>
    <dbReference type="NCBI Taxonomy" id="9606"/>
    <lineage>
        <taxon>Eukaryota</taxon>
        <taxon>Metazoa</taxon>
        <taxon>Chordata</taxon>
        <taxon>Craniata</taxon>
        <taxon>Vertebrata</taxon>
        <taxon>Euteleostomi</taxon>
        <taxon>Mammalia</taxon>
        <taxon>Eutheria</taxon>
        <taxon>Euarchontoglires</taxon>
        <taxon>Primates</taxon>
        <taxon>Haplorrhini</taxon>
        <taxon>Catarrhini</taxon>
        <taxon>Hominidae</taxon>
        <taxon>Homo</taxon>
    </lineage>
</organism>
<keyword id="KW-0221">Differentiation</keyword>
<keyword id="KW-0472">Membrane</keyword>
<keyword id="KW-1267">Proteomics identification</keyword>
<keyword id="KW-1185">Reference proteome</keyword>
<keyword id="KW-0744">Spermatogenesis</keyword>
<keyword id="KW-0812">Transmembrane</keyword>
<keyword id="KW-1133">Transmembrane helix</keyword>